<gene>
    <name type="primary">CYP3A15</name>
</gene>
<comment type="function">
    <text>Cytochromes P450 are a group of heme-thiolate monooxygenases. In liver microsomes, this enzyme is involved in an NADPH-dependent electron transport pathway. It oxidizes a variety of structurally unrelated compounds, including steroids, fatty acids, and xenobiotics.</text>
</comment>
<comment type="catalytic activity">
    <reaction>
        <text>an organic molecule + reduced [NADPH--hemoprotein reductase] + O2 = an alcohol + oxidized [NADPH--hemoprotein reductase] + H2O + H(+)</text>
        <dbReference type="Rhea" id="RHEA:17149"/>
        <dbReference type="Rhea" id="RHEA-COMP:11964"/>
        <dbReference type="Rhea" id="RHEA-COMP:11965"/>
        <dbReference type="ChEBI" id="CHEBI:15377"/>
        <dbReference type="ChEBI" id="CHEBI:15378"/>
        <dbReference type="ChEBI" id="CHEBI:15379"/>
        <dbReference type="ChEBI" id="CHEBI:30879"/>
        <dbReference type="ChEBI" id="CHEBI:57618"/>
        <dbReference type="ChEBI" id="CHEBI:58210"/>
        <dbReference type="ChEBI" id="CHEBI:142491"/>
        <dbReference type="EC" id="1.14.14.1"/>
    </reaction>
</comment>
<comment type="cofactor">
    <cofactor evidence="1">
        <name>heme</name>
        <dbReference type="ChEBI" id="CHEBI:30413"/>
    </cofactor>
</comment>
<comment type="subcellular location">
    <subcellularLocation>
        <location>Endoplasmic reticulum membrane</location>
        <topology>Peripheral membrane protein</topology>
    </subcellularLocation>
    <subcellularLocation>
        <location>Microsome membrane</location>
        <topology>Peripheral membrane protein</topology>
    </subcellularLocation>
</comment>
<comment type="induction">
    <text>P450 can be induced to high levels in liver and other tissues by various foreign compounds, including drugs, pesticides, and carcinogens.</text>
</comment>
<comment type="similarity">
    <text evidence="2">Belongs to the cytochrome P450 family.</text>
</comment>
<organism>
    <name type="scientific">Cavia porcellus</name>
    <name type="common">Guinea pig</name>
    <dbReference type="NCBI Taxonomy" id="10141"/>
    <lineage>
        <taxon>Eukaryota</taxon>
        <taxon>Metazoa</taxon>
        <taxon>Chordata</taxon>
        <taxon>Craniata</taxon>
        <taxon>Vertebrata</taxon>
        <taxon>Euteleostomi</taxon>
        <taxon>Mammalia</taxon>
        <taxon>Eutheria</taxon>
        <taxon>Euarchontoglires</taxon>
        <taxon>Glires</taxon>
        <taxon>Rodentia</taxon>
        <taxon>Hystricomorpha</taxon>
        <taxon>Caviidae</taxon>
        <taxon>Cavia</taxon>
    </lineage>
</organism>
<protein>
    <recommendedName>
        <fullName>Cytochrome P450 3A15</fullName>
        <ecNumber>1.14.14.1</ecNumber>
    </recommendedName>
    <alternativeName>
        <fullName>CYPIIIA15</fullName>
    </alternativeName>
</protein>
<name>CP3AF_CAVPO</name>
<feature type="chain" id="PRO_0000051798" description="Cytochrome P450 3A15">
    <location>
        <begin position="1"/>
        <end position="503"/>
    </location>
</feature>
<feature type="binding site" description="axial binding residue" evidence="1">
    <location>
        <position position="442"/>
    </location>
    <ligand>
        <name>heme</name>
        <dbReference type="ChEBI" id="CHEBI:30413"/>
    </ligand>
    <ligandPart>
        <name>Fe</name>
        <dbReference type="ChEBI" id="CHEBI:18248"/>
    </ligandPart>
</feature>
<proteinExistence type="evidence at transcript level"/>
<evidence type="ECO:0000250" key="1"/>
<evidence type="ECO:0000305" key="2"/>
<dbReference type="EC" id="1.14.14.1"/>
<dbReference type="EMBL" id="D26487">
    <property type="protein sequence ID" value="BAA05498.1"/>
    <property type="molecule type" value="mRNA"/>
</dbReference>
<dbReference type="RefSeq" id="NP_001166588.1">
    <property type="nucleotide sequence ID" value="NM_001173117.1"/>
</dbReference>
<dbReference type="SMR" id="Q64406"/>
<dbReference type="GeneID" id="100379245"/>
<dbReference type="KEGG" id="cpoc:100379245"/>
<dbReference type="CTD" id="100379245"/>
<dbReference type="InParanoid" id="Q64406"/>
<dbReference type="OrthoDB" id="1470350at2759"/>
<dbReference type="Proteomes" id="UP000005447">
    <property type="component" value="Unassembled WGS sequence"/>
</dbReference>
<dbReference type="GO" id="GO:0005789">
    <property type="term" value="C:endoplasmic reticulum membrane"/>
    <property type="evidence" value="ECO:0007669"/>
    <property type="project" value="UniProtKB-SubCell"/>
</dbReference>
<dbReference type="GO" id="GO:0020037">
    <property type="term" value="F:heme binding"/>
    <property type="evidence" value="ECO:0007669"/>
    <property type="project" value="InterPro"/>
</dbReference>
<dbReference type="GO" id="GO:0005506">
    <property type="term" value="F:iron ion binding"/>
    <property type="evidence" value="ECO:0007669"/>
    <property type="project" value="InterPro"/>
</dbReference>
<dbReference type="GO" id="GO:0016712">
    <property type="term" value="F:oxidoreductase activity, acting on paired donors, with incorporation or reduction of molecular oxygen, reduced flavin or flavoprotein as one donor, and incorporation of one atom of oxygen"/>
    <property type="evidence" value="ECO:0007669"/>
    <property type="project" value="UniProtKB-EC"/>
</dbReference>
<dbReference type="GO" id="GO:0050649">
    <property type="term" value="F:testosterone 6-beta-hydroxylase activity"/>
    <property type="evidence" value="ECO:0007669"/>
    <property type="project" value="TreeGrafter"/>
</dbReference>
<dbReference type="GO" id="GO:0070989">
    <property type="term" value="P:oxidative demethylation"/>
    <property type="evidence" value="ECO:0007669"/>
    <property type="project" value="TreeGrafter"/>
</dbReference>
<dbReference type="GO" id="GO:0008202">
    <property type="term" value="P:steroid metabolic process"/>
    <property type="evidence" value="ECO:0007669"/>
    <property type="project" value="TreeGrafter"/>
</dbReference>
<dbReference type="CDD" id="cd20650">
    <property type="entry name" value="CYP3A"/>
    <property type="match status" value="1"/>
</dbReference>
<dbReference type="FunFam" id="1.10.630.10:FF:000096">
    <property type="entry name" value="Cytochrome P450 3A4"/>
    <property type="match status" value="1"/>
</dbReference>
<dbReference type="Gene3D" id="1.10.630.10">
    <property type="entry name" value="Cytochrome P450"/>
    <property type="match status" value="1"/>
</dbReference>
<dbReference type="InterPro" id="IPR001128">
    <property type="entry name" value="Cyt_P450"/>
</dbReference>
<dbReference type="InterPro" id="IPR017972">
    <property type="entry name" value="Cyt_P450_CS"/>
</dbReference>
<dbReference type="InterPro" id="IPR008072">
    <property type="entry name" value="Cyt_P450_E_CYP3A"/>
</dbReference>
<dbReference type="InterPro" id="IPR002402">
    <property type="entry name" value="Cyt_P450_E_grp-II"/>
</dbReference>
<dbReference type="InterPro" id="IPR036396">
    <property type="entry name" value="Cyt_P450_sf"/>
</dbReference>
<dbReference type="InterPro" id="IPR050705">
    <property type="entry name" value="Cytochrome_P450_3A"/>
</dbReference>
<dbReference type="PANTHER" id="PTHR24302:SF38">
    <property type="entry name" value="CYTOCHROME P450 3A5"/>
    <property type="match status" value="1"/>
</dbReference>
<dbReference type="PANTHER" id="PTHR24302">
    <property type="entry name" value="CYTOCHROME P450 FAMILY 3"/>
    <property type="match status" value="1"/>
</dbReference>
<dbReference type="Pfam" id="PF00067">
    <property type="entry name" value="p450"/>
    <property type="match status" value="1"/>
</dbReference>
<dbReference type="PRINTS" id="PR00464">
    <property type="entry name" value="EP450II"/>
</dbReference>
<dbReference type="PRINTS" id="PR01689">
    <property type="entry name" value="EP450IICYP3A"/>
</dbReference>
<dbReference type="PRINTS" id="PR00385">
    <property type="entry name" value="P450"/>
</dbReference>
<dbReference type="SUPFAM" id="SSF48264">
    <property type="entry name" value="Cytochrome P450"/>
    <property type="match status" value="1"/>
</dbReference>
<dbReference type="PROSITE" id="PS00086">
    <property type="entry name" value="CYTOCHROME_P450"/>
    <property type="match status" value="1"/>
</dbReference>
<keyword id="KW-0256">Endoplasmic reticulum</keyword>
<keyword id="KW-0349">Heme</keyword>
<keyword id="KW-0408">Iron</keyword>
<keyword id="KW-0472">Membrane</keyword>
<keyword id="KW-0479">Metal-binding</keyword>
<keyword id="KW-0492">Microsome</keyword>
<keyword id="KW-0503">Monooxygenase</keyword>
<keyword id="KW-0560">Oxidoreductase</keyword>
<keyword id="KW-1185">Reference proteome</keyword>
<accession>Q64406</accession>
<sequence length="503" mass="58139">MDLIPSFSLETWVLLALSLVLLYQYATYSHGFFKKLGIPGPKPLPLFGNVLSYRKGMWSFDIECRKKYGNMWGLYDGPQPVLAITEPDMIKAVLVKECYSVFTNRRSLVPVGFMKKSVSLSEDEEWKRIRTQLSPNFTSGKLKEMFPIIKQYGDVLVKNLRQEAEKGKPVQLKEIFGAYGMDIIIATAFGVNVDSLNNPHDPFVSKANKLFRFDFLSPFLLSTVMFPFLTQLYEMLSISIFPRDSLKFFTKFVKKTKENHLESNKKQRVNFLQMMLNSQNFKDTESHKALSDVEILAQSIIFIFAGYETSSSTLSCIMYSLATHPDVQKKLHQEIDKTLPNKAFPTYDVMMEMEYLDMVVNETLRLYPVANRIERMSKKDFEINGMSFPKGTLVMIPSFALHRDSKYWPEPDEFRPERFSKKNKENIDPYIYMPFGNGPRNCIGRRMALMNLKLALIRLLQNFSFYPCKETQIPLRLSSEALLQPEKPLILKVVSRDETIRGA</sequence>
<reference key="1">
    <citation type="journal article" date="1997" name="Arch. Biochem. Biophys.">
        <title>Regulation of CYP1A and CYP3A mRNAs by ascorbic acid in guinea pigs.</title>
        <authorList>
            <person name="Mori T."/>
            <person name="Itoh S."/>
            <person name="Ohgiya S."/>
            <person name="Ishizaki K."/>
            <person name="Kamataki T."/>
        </authorList>
    </citation>
    <scope>NUCLEOTIDE SEQUENCE [MRNA]</scope>
    <source>
        <strain>Hartley</strain>
        <tissue>Liver</tissue>
    </source>
</reference>